<dbReference type="EMBL" id="FM999986">
    <property type="protein sequence ID" value="CAX48601.1"/>
    <property type="molecule type" value="mRNA"/>
</dbReference>
<dbReference type="GO" id="GO:0005576">
    <property type="term" value="C:extracellular region"/>
    <property type="evidence" value="ECO:0007669"/>
    <property type="project" value="UniProtKB-SubCell"/>
</dbReference>
<dbReference type="GO" id="GO:0006952">
    <property type="term" value="P:defense response"/>
    <property type="evidence" value="ECO:0007669"/>
    <property type="project" value="UniProtKB-KW"/>
</dbReference>
<dbReference type="InterPro" id="IPR004275">
    <property type="entry name" value="Frog_antimicrobial_propeptide"/>
</dbReference>
<dbReference type="Pfam" id="PF03032">
    <property type="entry name" value="FSAP_sig_propep"/>
    <property type="match status" value="1"/>
</dbReference>
<keyword id="KW-0027">Amidation</keyword>
<keyword id="KW-0878">Amphibian defense peptide</keyword>
<keyword id="KW-0165">Cleavage on pair of basic residues</keyword>
<keyword id="KW-0903">Direct protein sequencing</keyword>
<keyword id="KW-0964">Secreted</keyword>
<keyword id="KW-0732">Signal</keyword>
<accession>C5J8E3</accession>
<proteinExistence type="evidence at protein level"/>
<gene>
    <name evidence="4" type="primary">sauvatide</name>
</gene>
<protein>
    <recommendedName>
        <fullName evidence="3 4">Sauvatide</fullName>
    </recommendedName>
</protein>
<evidence type="ECO:0000255" key="1"/>
<evidence type="ECO:0000269" key="2">
    <source>
    </source>
</evidence>
<evidence type="ECO:0000303" key="3">
    <source>
    </source>
</evidence>
<evidence type="ECO:0000312" key="4">
    <source>
        <dbReference type="EMBL" id="CAX48601.1"/>
    </source>
</evidence>
<reference evidence="4" key="1">
    <citation type="journal article" date="2009" name="Biochem. Biophys. Res. Commun.">
        <title>Sauvatide - A novel amidated myotropic decapeptide from the skin secretion of the waxy monkey frog, Phyllomedusa sauvagei.</title>
        <authorList>
            <person name="Wang L."/>
            <person name="Zhou M."/>
            <person name="Zhou Z."/>
            <person name="Chen T."/>
            <person name="Walker B."/>
            <person name="Shaw C."/>
        </authorList>
    </citation>
    <scope>NUCLEOTIDE SEQUENCE [MRNA]</scope>
    <scope>PROTEIN SEQUENCE OF 49-58</scope>
    <scope>FUNCTION</scope>
    <scope>SUBCELLULAR LOCATION</scope>
    <scope>TISSUE SPECIFICITY</scope>
    <scope>MASS SPECTROMETRY</scope>
    <scope>AMIDATION AT LYS-58</scope>
    <source>
        <tissue evidence="4">Skin</tissue>
    </source>
</reference>
<organism>
    <name type="scientific">Phyllomedusa sauvagei</name>
    <name type="common">Sauvage's leaf frog</name>
    <dbReference type="NCBI Taxonomy" id="8395"/>
    <lineage>
        <taxon>Eukaryota</taxon>
        <taxon>Metazoa</taxon>
        <taxon>Chordata</taxon>
        <taxon>Craniata</taxon>
        <taxon>Vertebrata</taxon>
        <taxon>Euteleostomi</taxon>
        <taxon>Amphibia</taxon>
        <taxon>Batrachia</taxon>
        <taxon>Anura</taxon>
        <taxon>Neobatrachia</taxon>
        <taxon>Hyloidea</taxon>
        <taxon>Hylidae</taxon>
        <taxon>Phyllomedusinae</taxon>
        <taxon>Phyllomedusa</taxon>
    </lineage>
</organism>
<sequence length="62" mass="7145">MDILKKSLFLILFLGLVSISFCDGEKRQDDDEANESEEKKEIHEVEKRLRPAILVRTKGKGK</sequence>
<comment type="function">
    <text evidence="2">Induces contraction of smooth muscle in isolated rat urinary bladder with an EC(50) value of 2.2nM.</text>
</comment>
<comment type="subcellular location">
    <subcellularLocation>
        <location evidence="2">Secreted</location>
    </subcellularLocation>
</comment>
<comment type="tissue specificity">
    <text evidence="2">Expressed by the skin glands.</text>
</comment>
<comment type="mass spectrometry" mass="1166.04" method="MALDI" evidence="2"/>
<comment type="similarity">
    <text evidence="1">Belongs to the frog skin active peptide (FSAP) family.</text>
</comment>
<name>SAUVE_PHYSA</name>
<feature type="signal peptide" evidence="1">
    <location>
        <begin position="1"/>
        <end position="24"/>
    </location>
</feature>
<feature type="propeptide" id="PRO_0000391685" evidence="2">
    <location>
        <begin position="25"/>
        <end position="46"/>
    </location>
</feature>
<feature type="peptide" id="PRO_5000471235" description="Sauvatide" evidence="2">
    <location>
        <begin position="49"/>
        <end position="58"/>
    </location>
</feature>
<feature type="modified residue" description="Lysine amide" evidence="2">
    <location>
        <position position="58"/>
    </location>
</feature>